<name>MZM1_AJECN</name>
<sequence>MAATTAPNPLAAYRFLLRATRIAFQGDFTTLHAARAEARKQFDQHRQQGVDTPMRIQHAMETAEILRTNVVQGVKISGDGEEADRYASILVMRRFRGEYEGEDERREKEREARGGCELRIHEHIERGDNDSIKTAGKNERVKVAVGKACSNTQ</sequence>
<feature type="transit peptide" description="Mitochondrion" evidence="2">
    <location>
        <begin position="1"/>
        <end position="56"/>
    </location>
</feature>
<feature type="chain" id="PRO_0000405476" description="Mitochondrial zinc maintenance protein 1, mitochondrial">
    <location>
        <begin position="57"/>
        <end position="153"/>
    </location>
</feature>
<accession>A6RD58</accession>
<keyword id="KW-0143">Chaperone</keyword>
<keyword id="KW-0496">Mitochondrion</keyword>
<keyword id="KW-1185">Reference proteome</keyword>
<keyword id="KW-0809">Transit peptide</keyword>
<organism>
    <name type="scientific">Ajellomyces capsulatus (strain NAm1 / WU24)</name>
    <name type="common">Darling's disease fungus</name>
    <name type="synonym">Histoplasma capsulatum</name>
    <dbReference type="NCBI Taxonomy" id="2059318"/>
    <lineage>
        <taxon>Eukaryota</taxon>
        <taxon>Fungi</taxon>
        <taxon>Dikarya</taxon>
        <taxon>Ascomycota</taxon>
        <taxon>Pezizomycotina</taxon>
        <taxon>Eurotiomycetes</taxon>
        <taxon>Eurotiomycetidae</taxon>
        <taxon>Onygenales</taxon>
        <taxon>Ajellomycetaceae</taxon>
        <taxon>Histoplasma</taxon>
    </lineage>
</organism>
<proteinExistence type="inferred from homology"/>
<protein>
    <recommendedName>
        <fullName>Mitochondrial zinc maintenance protein 1, mitochondrial</fullName>
    </recommendedName>
</protein>
<comment type="function">
    <text evidence="1">Assembly factor required for Rieske Fe-S protein RIP1 incorporation into the cytochrome b-c1 (CIII) complex. Functions as a chaperone, binding to this subunit within the mitochondrial matrix and stabilizing it prior to its translocation and insertion into the late CIII dimeric intermediate within the mitochondrial inner membrane. Modulates the mitochondrial matrix zinc pool (By similarity).</text>
</comment>
<comment type="subunit">
    <text evidence="1">Interacts with RIP1.</text>
</comment>
<comment type="subcellular location">
    <subcellularLocation>
        <location evidence="1">Mitochondrion matrix</location>
    </subcellularLocation>
</comment>
<comment type="similarity">
    <text evidence="3">Belongs to the complex I LYR family. MZM1 subfamily.</text>
</comment>
<evidence type="ECO:0000250" key="1"/>
<evidence type="ECO:0000255" key="2"/>
<evidence type="ECO:0000305" key="3"/>
<dbReference type="EMBL" id="CH476663">
    <property type="protein sequence ID" value="EDN11113.1"/>
    <property type="molecule type" value="Genomic_DNA"/>
</dbReference>
<dbReference type="SMR" id="A6RD58"/>
<dbReference type="STRING" id="339724.A6RD58"/>
<dbReference type="KEGG" id="aje:HCAG_07566"/>
<dbReference type="VEuPathDB" id="FungiDB:HCAG_07566"/>
<dbReference type="HOGENOM" id="CLU_147114_2_2_1"/>
<dbReference type="OMA" id="CELRIHE"/>
<dbReference type="OrthoDB" id="9644at299071"/>
<dbReference type="Proteomes" id="UP000009297">
    <property type="component" value="Unassembled WGS sequence"/>
</dbReference>
<dbReference type="GO" id="GO:0005759">
    <property type="term" value="C:mitochondrial matrix"/>
    <property type="evidence" value="ECO:0007669"/>
    <property type="project" value="UniProtKB-SubCell"/>
</dbReference>
<dbReference type="GO" id="GO:0044183">
    <property type="term" value="F:protein folding chaperone"/>
    <property type="evidence" value="ECO:0007669"/>
    <property type="project" value="TreeGrafter"/>
</dbReference>
<dbReference type="GO" id="GO:0034551">
    <property type="term" value="P:mitochondrial respiratory chain complex III assembly"/>
    <property type="evidence" value="ECO:0007669"/>
    <property type="project" value="InterPro"/>
</dbReference>
<dbReference type="CDD" id="cd20267">
    <property type="entry name" value="Complex1_LYR_LYRM7"/>
    <property type="match status" value="1"/>
</dbReference>
<dbReference type="InterPro" id="IPR045298">
    <property type="entry name" value="Complex1_LYR_LYRM7"/>
</dbReference>
<dbReference type="InterPro" id="IPR050435">
    <property type="entry name" value="MZM1/LYRM7"/>
</dbReference>
<dbReference type="PANTHER" id="PTHR46749">
    <property type="entry name" value="COMPLEX III ASSEMBLY FACTOR LYRM7"/>
    <property type="match status" value="1"/>
</dbReference>
<dbReference type="PANTHER" id="PTHR46749:SF1">
    <property type="entry name" value="COMPLEX III ASSEMBLY FACTOR LYRM7"/>
    <property type="match status" value="1"/>
</dbReference>
<reference key="1">
    <citation type="journal article" date="2009" name="Genome Res.">
        <title>Comparative genomic analyses of the human fungal pathogens Coccidioides and their relatives.</title>
        <authorList>
            <person name="Sharpton T.J."/>
            <person name="Stajich J.E."/>
            <person name="Rounsley S.D."/>
            <person name="Gardner M.J."/>
            <person name="Wortman J.R."/>
            <person name="Jordar V.S."/>
            <person name="Maiti R."/>
            <person name="Kodira C.D."/>
            <person name="Neafsey D.E."/>
            <person name="Zeng Q."/>
            <person name="Hung C.-Y."/>
            <person name="McMahan C."/>
            <person name="Muszewska A."/>
            <person name="Grynberg M."/>
            <person name="Mandel M.A."/>
            <person name="Kellner E.M."/>
            <person name="Barker B.M."/>
            <person name="Galgiani J.N."/>
            <person name="Orbach M.J."/>
            <person name="Kirkland T.N."/>
            <person name="Cole G.T."/>
            <person name="Henn M.R."/>
            <person name="Birren B.W."/>
            <person name="Taylor J.W."/>
        </authorList>
    </citation>
    <scope>NUCLEOTIDE SEQUENCE [LARGE SCALE GENOMIC DNA]</scope>
    <source>
        <strain>NAm1 / WU24</strain>
    </source>
</reference>
<gene>
    <name type="primary">MZM1</name>
    <name type="ORF">HCAG_07566</name>
</gene>